<sequence>MSGGRWISNLRQVFGRSRASISSSLLPFPPTSISSGFHVPRLLDAWKNPVAAAAAFRLPQSSGFATMNQLIRHGREEKHRSDRKRALGKCPQKQGVCLRVSTRTPKKPNSALGKIAKVRLSNRNDVFAYIPGEGHNLQEHSMVLVRGGRVKDLPGVKFHCIRGVKDLLGIPDRRRGRSKYGAEKPKST</sequence>
<comment type="function">
    <text>Protein S12 is involved in the translation initiation step.</text>
</comment>
<comment type="subcellular location">
    <subcellularLocation>
        <location>Mitochondrion</location>
    </subcellularLocation>
</comment>
<comment type="miscellaneous">
    <text>In this plant the mitochondrial S12 gene is nuclear encoded.</text>
</comment>
<comment type="similarity">
    <text evidence="2">Belongs to the universal ribosomal protein uS12 family.</text>
</comment>
<protein>
    <recommendedName>
        <fullName evidence="2">Small ribosomal subunit protein uS12m</fullName>
    </recommendedName>
    <alternativeName>
        <fullName>40S ribosomal protein S12, mitochondrial</fullName>
    </alternativeName>
</protein>
<name>RT12_OENEH</name>
<reference key="1">
    <citation type="journal article" date="1992" name="Nucleic Acids Res.">
        <title>The mitochondrial gene encoding ribosomal protein S12 has been translocated to the nuclear genome in Oenothera.</title>
        <authorList>
            <person name="Grohmann L."/>
            <person name="Brennicke A."/>
            <person name="Schuster W."/>
        </authorList>
    </citation>
    <scope>NUCLEOTIDE SEQUENCE [MRNA]</scope>
</reference>
<accession>Q01607</accession>
<evidence type="ECO:0000255" key="1"/>
<evidence type="ECO:0000305" key="2"/>
<keyword id="KW-0496">Mitochondrion</keyword>
<keyword id="KW-0687">Ribonucleoprotein</keyword>
<keyword id="KW-0689">Ribosomal protein</keyword>
<keyword id="KW-0809">Transit peptide</keyword>
<proteinExistence type="evidence at transcript level"/>
<gene>
    <name type="primary">RPS12</name>
</gene>
<organism>
    <name type="scientific">Oenothera elata subsp. hookeri</name>
    <name type="common">Hooker's evening primrose</name>
    <name type="synonym">Oenothera hookeri</name>
    <dbReference type="NCBI Taxonomy" id="85636"/>
    <lineage>
        <taxon>Eukaryota</taxon>
        <taxon>Viridiplantae</taxon>
        <taxon>Streptophyta</taxon>
        <taxon>Embryophyta</taxon>
        <taxon>Tracheophyta</taxon>
        <taxon>Spermatophyta</taxon>
        <taxon>Magnoliopsida</taxon>
        <taxon>eudicotyledons</taxon>
        <taxon>Gunneridae</taxon>
        <taxon>Pentapetalae</taxon>
        <taxon>rosids</taxon>
        <taxon>malvids</taxon>
        <taxon>Myrtales</taxon>
        <taxon>Onagraceae</taxon>
        <taxon>Onagroideae</taxon>
        <taxon>Onagreae</taxon>
        <taxon>Oenothera</taxon>
    </lineage>
</organism>
<feature type="transit peptide" description="Mitochondrion" evidence="1">
    <location>
        <begin position="1"/>
        <end position="63"/>
    </location>
</feature>
<feature type="chain" id="PRO_0000030604" description="Small ribosomal subunit protein uS12m">
    <location>
        <begin position="64"/>
        <end position="188"/>
    </location>
</feature>
<dbReference type="EMBL" id="X68040">
    <property type="protein sequence ID" value="CAA48176.1"/>
    <property type="molecule type" value="mRNA"/>
</dbReference>
<dbReference type="PIR" id="S26644">
    <property type="entry name" value="S26644"/>
</dbReference>
<dbReference type="SMR" id="Q01607"/>
<dbReference type="GO" id="GO:0005739">
    <property type="term" value="C:mitochondrion"/>
    <property type="evidence" value="ECO:0007669"/>
    <property type="project" value="UniProtKB-SubCell"/>
</dbReference>
<dbReference type="GO" id="GO:0015935">
    <property type="term" value="C:small ribosomal subunit"/>
    <property type="evidence" value="ECO:0007669"/>
    <property type="project" value="InterPro"/>
</dbReference>
<dbReference type="GO" id="GO:0003735">
    <property type="term" value="F:structural constituent of ribosome"/>
    <property type="evidence" value="ECO:0007669"/>
    <property type="project" value="InterPro"/>
</dbReference>
<dbReference type="GO" id="GO:0006412">
    <property type="term" value="P:translation"/>
    <property type="evidence" value="ECO:0007669"/>
    <property type="project" value="InterPro"/>
</dbReference>
<dbReference type="CDD" id="cd03368">
    <property type="entry name" value="Ribosomal_S12"/>
    <property type="match status" value="1"/>
</dbReference>
<dbReference type="FunFam" id="2.40.50.140:FF:000099">
    <property type="entry name" value="Ribosomal protein S12, mitochondrial"/>
    <property type="match status" value="1"/>
</dbReference>
<dbReference type="Gene3D" id="2.40.50.140">
    <property type="entry name" value="Nucleic acid-binding proteins"/>
    <property type="match status" value="1"/>
</dbReference>
<dbReference type="HAMAP" id="MF_00403_B">
    <property type="entry name" value="Ribosomal_uS12_B"/>
    <property type="match status" value="1"/>
</dbReference>
<dbReference type="InterPro" id="IPR012340">
    <property type="entry name" value="NA-bd_OB-fold"/>
</dbReference>
<dbReference type="InterPro" id="IPR006032">
    <property type="entry name" value="Ribosomal_uS12"/>
</dbReference>
<dbReference type="InterPro" id="IPR005679">
    <property type="entry name" value="Ribosomal_uS12_bac"/>
</dbReference>
<dbReference type="NCBIfam" id="TIGR00981">
    <property type="entry name" value="rpsL_bact"/>
    <property type="match status" value="1"/>
</dbReference>
<dbReference type="PANTHER" id="PTHR11652">
    <property type="entry name" value="30S RIBOSOMAL PROTEIN S12 FAMILY MEMBER"/>
    <property type="match status" value="1"/>
</dbReference>
<dbReference type="Pfam" id="PF00164">
    <property type="entry name" value="Ribosom_S12_S23"/>
    <property type="match status" value="1"/>
</dbReference>
<dbReference type="PRINTS" id="PR01034">
    <property type="entry name" value="RIBOSOMALS12"/>
</dbReference>
<dbReference type="SUPFAM" id="SSF50249">
    <property type="entry name" value="Nucleic acid-binding proteins"/>
    <property type="match status" value="1"/>
</dbReference>